<reference key="1">
    <citation type="journal article" date="2001" name="J. Bacteriol.">
        <title>Genome sequence and comparative analysis of the solvent-producing bacterium Clostridium acetobutylicum.</title>
        <authorList>
            <person name="Noelling J."/>
            <person name="Breton G."/>
            <person name="Omelchenko M.V."/>
            <person name="Makarova K.S."/>
            <person name="Zeng Q."/>
            <person name="Gibson R."/>
            <person name="Lee H.M."/>
            <person name="Dubois J."/>
            <person name="Qiu D."/>
            <person name="Hitti J."/>
            <person name="Wolf Y.I."/>
            <person name="Tatusov R.L."/>
            <person name="Sabathe F."/>
            <person name="Doucette-Stamm L.A."/>
            <person name="Soucaille P."/>
            <person name="Daly M.J."/>
            <person name="Bennett G.N."/>
            <person name="Koonin E.V."/>
            <person name="Smith D.R."/>
        </authorList>
    </citation>
    <scope>NUCLEOTIDE SEQUENCE [LARGE SCALE GENOMIC DNA]</scope>
    <source>
        <strain>ATCC 824 / DSM 792 / JCM 1419 / IAM 19013 / LMG 5710 / NBRC 13948 / NRRL B-527 / VKM B-1787 / 2291 / W</strain>
    </source>
</reference>
<dbReference type="EC" id="4.2.1.11" evidence="1"/>
<dbReference type="EMBL" id="AE001437">
    <property type="protein sequence ID" value="AAK78690.1"/>
    <property type="molecule type" value="Genomic_DNA"/>
</dbReference>
<dbReference type="PIR" id="G96987">
    <property type="entry name" value="G96987"/>
</dbReference>
<dbReference type="RefSeq" id="NP_347350.1">
    <property type="nucleotide sequence ID" value="NC_003030.1"/>
</dbReference>
<dbReference type="RefSeq" id="WP_010964032.1">
    <property type="nucleotide sequence ID" value="NC_003030.1"/>
</dbReference>
<dbReference type="SMR" id="Q97L52"/>
<dbReference type="STRING" id="272562.CA_C0713"/>
<dbReference type="GeneID" id="44997224"/>
<dbReference type="KEGG" id="cac:CA_C0713"/>
<dbReference type="PATRIC" id="fig|272562.8.peg.916"/>
<dbReference type="eggNOG" id="COG0148">
    <property type="taxonomic scope" value="Bacteria"/>
</dbReference>
<dbReference type="HOGENOM" id="CLU_031223_2_1_9"/>
<dbReference type="OrthoDB" id="9804716at2"/>
<dbReference type="UniPathway" id="UPA00109">
    <property type="reaction ID" value="UER00187"/>
</dbReference>
<dbReference type="Proteomes" id="UP000000814">
    <property type="component" value="Chromosome"/>
</dbReference>
<dbReference type="GO" id="GO:0009986">
    <property type="term" value="C:cell surface"/>
    <property type="evidence" value="ECO:0007669"/>
    <property type="project" value="UniProtKB-SubCell"/>
</dbReference>
<dbReference type="GO" id="GO:0005576">
    <property type="term" value="C:extracellular region"/>
    <property type="evidence" value="ECO:0007669"/>
    <property type="project" value="UniProtKB-SubCell"/>
</dbReference>
<dbReference type="GO" id="GO:0000015">
    <property type="term" value="C:phosphopyruvate hydratase complex"/>
    <property type="evidence" value="ECO:0007669"/>
    <property type="project" value="InterPro"/>
</dbReference>
<dbReference type="GO" id="GO:0000287">
    <property type="term" value="F:magnesium ion binding"/>
    <property type="evidence" value="ECO:0007669"/>
    <property type="project" value="UniProtKB-UniRule"/>
</dbReference>
<dbReference type="GO" id="GO:0004634">
    <property type="term" value="F:phosphopyruvate hydratase activity"/>
    <property type="evidence" value="ECO:0007669"/>
    <property type="project" value="UniProtKB-UniRule"/>
</dbReference>
<dbReference type="GO" id="GO:0006096">
    <property type="term" value="P:glycolytic process"/>
    <property type="evidence" value="ECO:0007669"/>
    <property type="project" value="UniProtKB-UniRule"/>
</dbReference>
<dbReference type="CDD" id="cd03313">
    <property type="entry name" value="enolase"/>
    <property type="match status" value="1"/>
</dbReference>
<dbReference type="FunFam" id="3.20.20.120:FF:000001">
    <property type="entry name" value="Enolase"/>
    <property type="match status" value="1"/>
</dbReference>
<dbReference type="FunFam" id="3.30.390.10:FF:000001">
    <property type="entry name" value="Enolase"/>
    <property type="match status" value="1"/>
</dbReference>
<dbReference type="Gene3D" id="3.20.20.120">
    <property type="entry name" value="Enolase-like C-terminal domain"/>
    <property type="match status" value="1"/>
</dbReference>
<dbReference type="Gene3D" id="3.30.390.10">
    <property type="entry name" value="Enolase-like, N-terminal domain"/>
    <property type="match status" value="1"/>
</dbReference>
<dbReference type="HAMAP" id="MF_00318">
    <property type="entry name" value="Enolase"/>
    <property type="match status" value="1"/>
</dbReference>
<dbReference type="InterPro" id="IPR000941">
    <property type="entry name" value="Enolase"/>
</dbReference>
<dbReference type="InterPro" id="IPR036849">
    <property type="entry name" value="Enolase-like_C_sf"/>
</dbReference>
<dbReference type="InterPro" id="IPR029017">
    <property type="entry name" value="Enolase-like_N"/>
</dbReference>
<dbReference type="InterPro" id="IPR020810">
    <property type="entry name" value="Enolase_C"/>
</dbReference>
<dbReference type="InterPro" id="IPR020809">
    <property type="entry name" value="Enolase_CS"/>
</dbReference>
<dbReference type="InterPro" id="IPR020811">
    <property type="entry name" value="Enolase_N"/>
</dbReference>
<dbReference type="NCBIfam" id="TIGR01060">
    <property type="entry name" value="eno"/>
    <property type="match status" value="1"/>
</dbReference>
<dbReference type="PANTHER" id="PTHR11902">
    <property type="entry name" value="ENOLASE"/>
    <property type="match status" value="1"/>
</dbReference>
<dbReference type="PANTHER" id="PTHR11902:SF1">
    <property type="entry name" value="ENOLASE"/>
    <property type="match status" value="1"/>
</dbReference>
<dbReference type="Pfam" id="PF00113">
    <property type="entry name" value="Enolase_C"/>
    <property type="match status" value="1"/>
</dbReference>
<dbReference type="Pfam" id="PF03952">
    <property type="entry name" value="Enolase_N"/>
    <property type="match status" value="1"/>
</dbReference>
<dbReference type="PIRSF" id="PIRSF001400">
    <property type="entry name" value="Enolase"/>
    <property type="match status" value="1"/>
</dbReference>
<dbReference type="PRINTS" id="PR00148">
    <property type="entry name" value="ENOLASE"/>
</dbReference>
<dbReference type="SFLD" id="SFLDS00001">
    <property type="entry name" value="Enolase"/>
    <property type="match status" value="1"/>
</dbReference>
<dbReference type="SFLD" id="SFLDF00002">
    <property type="entry name" value="enolase"/>
    <property type="match status" value="1"/>
</dbReference>
<dbReference type="SMART" id="SM01192">
    <property type="entry name" value="Enolase_C"/>
    <property type="match status" value="1"/>
</dbReference>
<dbReference type="SMART" id="SM01193">
    <property type="entry name" value="Enolase_N"/>
    <property type="match status" value="1"/>
</dbReference>
<dbReference type="SUPFAM" id="SSF51604">
    <property type="entry name" value="Enolase C-terminal domain-like"/>
    <property type="match status" value="1"/>
</dbReference>
<dbReference type="SUPFAM" id="SSF54826">
    <property type="entry name" value="Enolase N-terminal domain-like"/>
    <property type="match status" value="1"/>
</dbReference>
<dbReference type="PROSITE" id="PS00164">
    <property type="entry name" value="ENOLASE"/>
    <property type="match status" value="1"/>
</dbReference>
<proteinExistence type="inferred from homology"/>
<sequence length="431" mass="46802">MKSYVEIVDVMARQILDSRANPTVEVEVVLEDGTVGRASVPSGASTGQFEAVELRDNDKAQYLGKSVLNAVDNVNETIATELIGMNVFDQTLIDQTMLEIDGTENKSKLGANAMLGVSLAVARAAAEYLGISLYQYLGGVNAKVLPVPMMNIVNGGKHADNNVDFQEFMIMPAGAPSFSEALRSCAEVYHTLKSLLQSKGLETAVGDEGGFAPNLNSNEEAIQIILEAVTKAGYEPGKDMFIAMDPASTEFYENGKYNLKGEGKVYTSEEMVEVYANLVEKYPIISLEDGMAEEDWDGWKLLTDRIGDKVQLVGDDLFVTNTKRLSKGIQLGVANSILIKLNQIGTLTETLNAIEMAQRAGYTAVVSHRSGETEDTTISDLVVAVNAGQIKTGAPARTERVAKYNQLLRIEEELGEVAEFRGLNAFYNIKK</sequence>
<name>ENO_CLOAB</name>
<keyword id="KW-0963">Cytoplasm</keyword>
<keyword id="KW-0324">Glycolysis</keyword>
<keyword id="KW-0456">Lyase</keyword>
<keyword id="KW-0460">Magnesium</keyword>
<keyword id="KW-0479">Metal-binding</keyword>
<keyword id="KW-1185">Reference proteome</keyword>
<keyword id="KW-0964">Secreted</keyword>
<gene>
    <name evidence="1" type="primary">eno</name>
    <name type="ordered locus">CA_C0713</name>
</gene>
<evidence type="ECO:0000255" key="1">
    <source>
        <dbReference type="HAMAP-Rule" id="MF_00318"/>
    </source>
</evidence>
<protein>
    <recommendedName>
        <fullName evidence="1">Enolase</fullName>
        <ecNumber evidence="1">4.2.1.11</ecNumber>
    </recommendedName>
    <alternativeName>
        <fullName evidence="1">2-phospho-D-glycerate hydro-lyase</fullName>
    </alternativeName>
    <alternativeName>
        <fullName evidence="1">2-phosphoglycerate dehydratase</fullName>
    </alternativeName>
</protein>
<accession>Q97L52</accession>
<comment type="function">
    <text evidence="1">Catalyzes the reversible conversion of 2-phosphoglycerate (2-PG) into phosphoenolpyruvate (PEP). It is essential for the degradation of carbohydrates via glycolysis.</text>
</comment>
<comment type="catalytic activity">
    <reaction evidence="1">
        <text>(2R)-2-phosphoglycerate = phosphoenolpyruvate + H2O</text>
        <dbReference type="Rhea" id="RHEA:10164"/>
        <dbReference type="ChEBI" id="CHEBI:15377"/>
        <dbReference type="ChEBI" id="CHEBI:58289"/>
        <dbReference type="ChEBI" id="CHEBI:58702"/>
        <dbReference type="EC" id="4.2.1.11"/>
    </reaction>
</comment>
<comment type="cofactor">
    <cofactor evidence="1">
        <name>Mg(2+)</name>
        <dbReference type="ChEBI" id="CHEBI:18420"/>
    </cofactor>
    <text evidence="1">Binds a second Mg(2+) ion via substrate during catalysis.</text>
</comment>
<comment type="pathway">
    <text evidence="1">Carbohydrate degradation; glycolysis; pyruvate from D-glyceraldehyde 3-phosphate: step 4/5.</text>
</comment>
<comment type="subcellular location">
    <subcellularLocation>
        <location evidence="1">Cytoplasm</location>
    </subcellularLocation>
    <subcellularLocation>
        <location evidence="1">Secreted</location>
    </subcellularLocation>
    <subcellularLocation>
        <location evidence="1">Cell surface</location>
    </subcellularLocation>
    <text evidence="1">Fractions of enolase are present in both the cytoplasm and on the cell surface.</text>
</comment>
<comment type="similarity">
    <text evidence="1">Belongs to the enolase family.</text>
</comment>
<feature type="chain" id="PRO_0000133871" description="Enolase">
    <location>
        <begin position="1"/>
        <end position="431"/>
    </location>
</feature>
<feature type="active site" description="Proton donor" evidence="1">
    <location>
        <position position="208"/>
    </location>
</feature>
<feature type="active site" description="Proton acceptor" evidence="1">
    <location>
        <position position="340"/>
    </location>
</feature>
<feature type="binding site" evidence="1">
    <location>
        <position position="166"/>
    </location>
    <ligand>
        <name>(2R)-2-phosphoglycerate</name>
        <dbReference type="ChEBI" id="CHEBI:58289"/>
    </ligand>
</feature>
<feature type="binding site" evidence="1">
    <location>
        <position position="245"/>
    </location>
    <ligand>
        <name>Mg(2+)</name>
        <dbReference type="ChEBI" id="CHEBI:18420"/>
    </ligand>
</feature>
<feature type="binding site" evidence="1">
    <location>
        <position position="288"/>
    </location>
    <ligand>
        <name>Mg(2+)</name>
        <dbReference type="ChEBI" id="CHEBI:18420"/>
    </ligand>
</feature>
<feature type="binding site" evidence="1">
    <location>
        <position position="315"/>
    </location>
    <ligand>
        <name>Mg(2+)</name>
        <dbReference type="ChEBI" id="CHEBI:18420"/>
    </ligand>
</feature>
<feature type="binding site" evidence="1">
    <location>
        <position position="340"/>
    </location>
    <ligand>
        <name>(2R)-2-phosphoglycerate</name>
        <dbReference type="ChEBI" id="CHEBI:58289"/>
    </ligand>
</feature>
<feature type="binding site" evidence="1">
    <location>
        <position position="369"/>
    </location>
    <ligand>
        <name>(2R)-2-phosphoglycerate</name>
        <dbReference type="ChEBI" id="CHEBI:58289"/>
    </ligand>
</feature>
<feature type="binding site" evidence="1">
    <location>
        <position position="370"/>
    </location>
    <ligand>
        <name>(2R)-2-phosphoglycerate</name>
        <dbReference type="ChEBI" id="CHEBI:58289"/>
    </ligand>
</feature>
<feature type="binding site" evidence="1">
    <location>
        <position position="391"/>
    </location>
    <ligand>
        <name>(2R)-2-phosphoglycerate</name>
        <dbReference type="ChEBI" id="CHEBI:58289"/>
    </ligand>
</feature>
<organism>
    <name type="scientific">Clostridium acetobutylicum (strain ATCC 824 / DSM 792 / JCM 1419 / IAM 19013 / LMG 5710 / NBRC 13948 / NRRL B-527 / VKM B-1787 / 2291 / W)</name>
    <dbReference type="NCBI Taxonomy" id="272562"/>
    <lineage>
        <taxon>Bacteria</taxon>
        <taxon>Bacillati</taxon>
        <taxon>Bacillota</taxon>
        <taxon>Clostridia</taxon>
        <taxon>Eubacteriales</taxon>
        <taxon>Clostridiaceae</taxon>
        <taxon>Clostridium</taxon>
    </lineage>
</organism>